<accession>Q1JA81</accession>
<organism>
    <name type="scientific">Streptococcus pyogenes serotype M12 (strain MGAS2096)</name>
    <dbReference type="NCBI Taxonomy" id="370553"/>
    <lineage>
        <taxon>Bacteria</taxon>
        <taxon>Bacillati</taxon>
        <taxon>Bacillota</taxon>
        <taxon>Bacilli</taxon>
        <taxon>Lactobacillales</taxon>
        <taxon>Streptococcaceae</taxon>
        <taxon>Streptococcus</taxon>
    </lineage>
</organism>
<gene>
    <name evidence="1" type="primary">hrcA</name>
    <name type="ordered locus">MGAS2096_Spy1528</name>
</gene>
<feature type="chain" id="PRO_1000010457" description="Heat-inducible transcription repressor HrcA">
    <location>
        <begin position="1"/>
        <end position="344"/>
    </location>
</feature>
<dbReference type="EMBL" id="CP000261">
    <property type="protein sequence ID" value="ABF36580.1"/>
    <property type="molecule type" value="Genomic_DNA"/>
</dbReference>
<dbReference type="SMR" id="Q1JA81"/>
<dbReference type="KEGG" id="spj:MGAS2096_Spy1528"/>
<dbReference type="HOGENOM" id="CLU_050019_1_0_9"/>
<dbReference type="GO" id="GO:0003677">
    <property type="term" value="F:DNA binding"/>
    <property type="evidence" value="ECO:0007669"/>
    <property type="project" value="InterPro"/>
</dbReference>
<dbReference type="GO" id="GO:0045892">
    <property type="term" value="P:negative regulation of DNA-templated transcription"/>
    <property type="evidence" value="ECO:0007669"/>
    <property type="project" value="UniProtKB-UniRule"/>
</dbReference>
<dbReference type="Gene3D" id="3.30.450.40">
    <property type="match status" value="1"/>
</dbReference>
<dbReference type="Gene3D" id="3.30.390.60">
    <property type="entry name" value="Heat-inducible transcription repressor hrca homolog, domain 3"/>
    <property type="match status" value="1"/>
</dbReference>
<dbReference type="Gene3D" id="1.10.10.10">
    <property type="entry name" value="Winged helix-like DNA-binding domain superfamily/Winged helix DNA-binding domain"/>
    <property type="match status" value="1"/>
</dbReference>
<dbReference type="HAMAP" id="MF_00081">
    <property type="entry name" value="HrcA"/>
    <property type="match status" value="1"/>
</dbReference>
<dbReference type="InterPro" id="IPR029016">
    <property type="entry name" value="GAF-like_dom_sf"/>
</dbReference>
<dbReference type="InterPro" id="IPR002571">
    <property type="entry name" value="HrcA"/>
</dbReference>
<dbReference type="InterPro" id="IPR021153">
    <property type="entry name" value="HrcA_C"/>
</dbReference>
<dbReference type="InterPro" id="IPR036388">
    <property type="entry name" value="WH-like_DNA-bd_sf"/>
</dbReference>
<dbReference type="InterPro" id="IPR036390">
    <property type="entry name" value="WH_DNA-bd_sf"/>
</dbReference>
<dbReference type="InterPro" id="IPR005104">
    <property type="entry name" value="WHTH_HrcA_DNA-bd"/>
</dbReference>
<dbReference type="InterPro" id="IPR023120">
    <property type="entry name" value="WHTH_transcript_rep_HrcA_IDD"/>
</dbReference>
<dbReference type="NCBIfam" id="TIGR00331">
    <property type="entry name" value="hrcA"/>
    <property type="match status" value="1"/>
</dbReference>
<dbReference type="PANTHER" id="PTHR34824">
    <property type="entry name" value="HEAT-INDUCIBLE TRANSCRIPTION REPRESSOR HRCA"/>
    <property type="match status" value="1"/>
</dbReference>
<dbReference type="PANTHER" id="PTHR34824:SF1">
    <property type="entry name" value="HEAT-INDUCIBLE TRANSCRIPTION REPRESSOR HRCA"/>
    <property type="match status" value="1"/>
</dbReference>
<dbReference type="Pfam" id="PF01628">
    <property type="entry name" value="HrcA"/>
    <property type="match status" value="1"/>
</dbReference>
<dbReference type="Pfam" id="PF03444">
    <property type="entry name" value="HrcA_DNA-bdg"/>
    <property type="match status" value="1"/>
</dbReference>
<dbReference type="PIRSF" id="PIRSF005485">
    <property type="entry name" value="HrcA"/>
    <property type="match status" value="1"/>
</dbReference>
<dbReference type="SUPFAM" id="SSF55781">
    <property type="entry name" value="GAF domain-like"/>
    <property type="match status" value="1"/>
</dbReference>
<dbReference type="SUPFAM" id="SSF46785">
    <property type="entry name" value="Winged helix' DNA-binding domain"/>
    <property type="match status" value="1"/>
</dbReference>
<evidence type="ECO:0000255" key="1">
    <source>
        <dbReference type="HAMAP-Rule" id="MF_00081"/>
    </source>
</evidence>
<comment type="function">
    <text evidence="1">Negative regulator of class I heat shock genes (grpE-dnaK-dnaJ and groELS operons). Prevents heat-shock induction of these operons.</text>
</comment>
<comment type="similarity">
    <text evidence="1">Belongs to the HrcA family.</text>
</comment>
<name>HRCA_STRPB</name>
<keyword id="KW-0678">Repressor</keyword>
<keyword id="KW-0346">Stress response</keyword>
<keyword id="KW-0804">Transcription</keyword>
<keyword id="KW-0805">Transcription regulation</keyword>
<proteinExistence type="inferred from homology"/>
<sequence length="344" mass="39024">MITQRQNDILNLIVELFTQTHEPVGSKALQRTIDSSSATIRNDMAKLEKLGLLEKAHTSSGRMPSPAGFKYFVEHSLRLDSIDEQDIYHVIKAFDFEAFKLEDMLQKASHILAEMTGYTSVILDVEPARQRLTGFDVVQLSNHDALAVMTLDESKPVTVQFAIPRNFLTRDLIAFKAIVEERLLDNSVIDIHYKLRTEIPQIVQKYFVTTDNVLQLFDYVFSELFLETVFVAGKVNSLTYSDLSTYQFLDNEQQVAISLRQSLKEGEMASVQVADSQEAALADVSVLTHKFLIPYRGFGLLSLIGPIDMDYRRSVSLVNIIGKVLAAKLGDYYRYLNSNHYEVH</sequence>
<protein>
    <recommendedName>
        <fullName evidence="1">Heat-inducible transcription repressor HrcA</fullName>
    </recommendedName>
</protein>
<reference key="1">
    <citation type="journal article" date="2006" name="Proc. Natl. Acad. Sci. U.S.A.">
        <title>Molecular genetic anatomy of inter- and intraserotype variation in the human bacterial pathogen group A Streptococcus.</title>
        <authorList>
            <person name="Beres S.B."/>
            <person name="Richter E.W."/>
            <person name="Nagiec M.J."/>
            <person name="Sumby P."/>
            <person name="Porcella S.F."/>
            <person name="DeLeo F.R."/>
            <person name="Musser J.M."/>
        </authorList>
    </citation>
    <scope>NUCLEOTIDE SEQUENCE [LARGE SCALE GENOMIC DNA]</scope>
    <source>
        <strain>MGAS2096</strain>
    </source>
</reference>